<keyword id="KW-0413">Isomerase</keyword>
<keyword id="KW-1185">Reference proteome</keyword>
<name>RPIA_THIDA</name>
<protein>
    <recommendedName>
        <fullName evidence="1">Ribose-5-phosphate isomerase A</fullName>
        <ecNumber evidence="1">5.3.1.6</ecNumber>
    </recommendedName>
    <alternativeName>
        <fullName evidence="1">Phosphoriboisomerase A</fullName>
        <shortName evidence="1">PRI</shortName>
    </alternativeName>
</protein>
<accession>Q3SGD3</accession>
<sequence length="218" mass="22978">MTQDEMKRAVARAAVDYAKGGIIGVGTGSTANHFIDALAEVKGRIEGTVASSEATAARLKSHGIQVLDLNSVGELEVYVDGADEITQHFAMIKGGGGALTREKIVAACSKQFVCIADDSKLVDVLGKFPLPVEVIPMARSHVARELVKLGGQPRLREGFTTDNGNVILDVHNLSIIDPVSLETAINQIVGVVTNGLFARRGADVLLLGTSTGVKTFTR</sequence>
<comment type="function">
    <text evidence="1">Catalyzes the reversible conversion of ribose-5-phosphate to ribulose 5-phosphate.</text>
</comment>
<comment type="catalytic activity">
    <reaction evidence="1">
        <text>aldehydo-D-ribose 5-phosphate = D-ribulose 5-phosphate</text>
        <dbReference type="Rhea" id="RHEA:14657"/>
        <dbReference type="ChEBI" id="CHEBI:58121"/>
        <dbReference type="ChEBI" id="CHEBI:58273"/>
        <dbReference type="EC" id="5.3.1.6"/>
    </reaction>
</comment>
<comment type="pathway">
    <text evidence="1">Carbohydrate degradation; pentose phosphate pathway; D-ribose 5-phosphate from D-ribulose 5-phosphate (non-oxidative stage): step 1/1.</text>
</comment>
<comment type="subunit">
    <text evidence="1">Homodimer.</text>
</comment>
<comment type="similarity">
    <text evidence="1">Belongs to the ribose 5-phosphate isomerase family.</text>
</comment>
<feature type="chain" id="PRO_1000017024" description="Ribose-5-phosphate isomerase A">
    <location>
        <begin position="1"/>
        <end position="218"/>
    </location>
</feature>
<feature type="active site" description="Proton acceptor" evidence="1">
    <location>
        <position position="102"/>
    </location>
</feature>
<feature type="binding site" evidence="1">
    <location>
        <begin position="27"/>
        <end position="30"/>
    </location>
    <ligand>
        <name>substrate</name>
    </ligand>
</feature>
<feature type="binding site" evidence="1">
    <location>
        <begin position="80"/>
        <end position="83"/>
    </location>
    <ligand>
        <name>substrate</name>
    </ligand>
</feature>
<feature type="binding site" evidence="1">
    <location>
        <begin position="93"/>
        <end position="96"/>
    </location>
    <ligand>
        <name>substrate</name>
    </ligand>
</feature>
<feature type="binding site" evidence="1">
    <location>
        <position position="120"/>
    </location>
    <ligand>
        <name>substrate</name>
    </ligand>
</feature>
<proteinExistence type="inferred from homology"/>
<organism>
    <name type="scientific">Thiobacillus denitrificans (strain ATCC 25259 / T1)</name>
    <dbReference type="NCBI Taxonomy" id="292415"/>
    <lineage>
        <taxon>Bacteria</taxon>
        <taxon>Pseudomonadati</taxon>
        <taxon>Pseudomonadota</taxon>
        <taxon>Betaproteobacteria</taxon>
        <taxon>Nitrosomonadales</taxon>
        <taxon>Thiobacillaceae</taxon>
        <taxon>Thiobacillus</taxon>
    </lineage>
</organism>
<dbReference type="EC" id="5.3.1.6" evidence="1"/>
<dbReference type="EMBL" id="CP000116">
    <property type="protein sequence ID" value="AAZ98317.1"/>
    <property type="molecule type" value="Genomic_DNA"/>
</dbReference>
<dbReference type="RefSeq" id="WP_011312876.1">
    <property type="nucleotide sequence ID" value="NC_007404.1"/>
</dbReference>
<dbReference type="SMR" id="Q3SGD3"/>
<dbReference type="STRING" id="292415.Tbd_2364"/>
<dbReference type="KEGG" id="tbd:Tbd_2364"/>
<dbReference type="eggNOG" id="COG0120">
    <property type="taxonomic scope" value="Bacteria"/>
</dbReference>
<dbReference type="HOGENOM" id="CLU_056590_1_1_4"/>
<dbReference type="UniPathway" id="UPA00115">
    <property type="reaction ID" value="UER00412"/>
</dbReference>
<dbReference type="Proteomes" id="UP000008291">
    <property type="component" value="Chromosome"/>
</dbReference>
<dbReference type="GO" id="GO:0005829">
    <property type="term" value="C:cytosol"/>
    <property type="evidence" value="ECO:0007669"/>
    <property type="project" value="TreeGrafter"/>
</dbReference>
<dbReference type="GO" id="GO:0004751">
    <property type="term" value="F:ribose-5-phosphate isomerase activity"/>
    <property type="evidence" value="ECO:0007669"/>
    <property type="project" value="UniProtKB-UniRule"/>
</dbReference>
<dbReference type="GO" id="GO:0006014">
    <property type="term" value="P:D-ribose metabolic process"/>
    <property type="evidence" value="ECO:0007669"/>
    <property type="project" value="TreeGrafter"/>
</dbReference>
<dbReference type="GO" id="GO:0009052">
    <property type="term" value="P:pentose-phosphate shunt, non-oxidative branch"/>
    <property type="evidence" value="ECO:0007669"/>
    <property type="project" value="UniProtKB-UniRule"/>
</dbReference>
<dbReference type="CDD" id="cd01398">
    <property type="entry name" value="RPI_A"/>
    <property type="match status" value="1"/>
</dbReference>
<dbReference type="FunFam" id="3.30.70.260:FF:000004">
    <property type="entry name" value="Ribose-5-phosphate isomerase A"/>
    <property type="match status" value="1"/>
</dbReference>
<dbReference type="FunFam" id="3.40.50.1360:FF:000001">
    <property type="entry name" value="Ribose-5-phosphate isomerase A"/>
    <property type="match status" value="1"/>
</dbReference>
<dbReference type="Gene3D" id="3.30.70.260">
    <property type="match status" value="1"/>
</dbReference>
<dbReference type="Gene3D" id="3.40.50.1360">
    <property type="match status" value="1"/>
</dbReference>
<dbReference type="HAMAP" id="MF_00170">
    <property type="entry name" value="Rib_5P_isom_A"/>
    <property type="match status" value="1"/>
</dbReference>
<dbReference type="InterPro" id="IPR037171">
    <property type="entry name" value="NagB/RpiA_transferase-like"/>
</dbReference>
<dbReference type="InterPro" id="IPR020672">
    <property type="entry name" value="Ribose5P_isomerase_typA_subgr"/>
</dbReference>
<dbReference type="InterPro" id="IPR004788">
    <property type="entry name" value="Ribose5P_isomerase_type_A"/>
</dbReference>
<dbReference type="NCBIfam" id="NF001924">
    <property type="entry name" value="PRK00702.1"/>
    <property type="match status" value="1"/>
</dbReference>
<dbReference type="NCBIfam" id="TIGR00021">
    <property type="entry name" value="rpiA"/>
    <property type="match status" value="1"/>
</dbReference>
<dbReference type="PANTHER" id="PTHR11934">
    <property type="entry name" value="RIBOSE-5-PHOSPHATE ISOMERASE"/>
    <property type="match status" value="1"/>
</dbReference>
<dbReference type="PANTHER" id="PTHR11934:SF0">
    <property type="entry name" value="RIBOSE-5-PHOSPHATE ISOMERASE"/>
    <property type="match status" value="1"/>
</dbReference>
<dbReference type="Pfam" id="PF06026">
    <property type="entry name" value="Rib_5-P_isom_A"/>
    <property type="match status" value="1"/>
</dbReference>
<dbReference type="SUPFAM" id="SSF75445">
    <property type="entry name" value="D-ribose-5-phosphate isomerase (RpiA), lid domain"/>
    <property type="match status" value="1"/>
</dbReference>
<dbReference type="SUPFAM" id="SSF100950">
    <property type="entry name" value="NagB/RpiA/CoA transferase-like"/>
    <property type="match status" value="1"/>
</dbReference>
<gene>
    <name evidence="1" type="primary">rpiA</name>
    <name type="ordered locus">Tbd_2364</name>
</gene>
<reference key="1">
    <citation type="journal article" date="2006" name="J. Bacteriol.">
        <title>The genome sequence of the obligately chemolithoautotrophic, facultatively anaerobic bacterium Thiobacillus denitrificans.</title>
        <authorList>
            <person name="Beller H.R."/>
            <person name="Chain P.S."/>
            <person name="Letain T.E."/>
            <person name="Chakicherla A."/>
            <person name="Larimer F.W."/>
            <person name="Richardson P.M."/>
            <person name="Coleman M.A."/>
            <person name="Wood A.P."/>
            <person name="Kelly D.P."/>
        </authorList>
    </citation>
    <scope>NUCLEOTIDE SEQUENCE [LARGE SCALE GENOMIC DNA]</scope>
    <source>
        <strain>ATCC 25259 / T1</strain>
    </source>
</reference>
<evidence type="ECO:0000255" key="1">
    <source>
        <dbReference type="HAMAP-Rule" id="MF_00170"/>
    </source>
</evidence>